<sequence>MLERAQRTLRREVRYSGVGIHFGKSATITLEPAKENTGIVFCRSDLLGEHIPALLPHVCNTGRSTTLSSGDSIIATVEHLMAALRSSNIDNVIVRCDEEEIPIGDGSSHVFMQLIHDAGVCTQNDKVSIARLSQPVYYQAQDTFLAAFPCDELKISYTLHYPQSPTIGTQYRSFVITEESFRKEIAPCRTFALYNELCFLMERGLIGGGCLENAVVFKDDGVISLGQLRFPDEPVRHKILDLIGDLSLVGRPFVAHIVAVGSGHSSNIALGRKILEVLQP</sequence>
<dbReference type="EC" id="3.5.1.108" evidence="1"/>
<dbReference type="EMBL" id="CR848038">
    <property type="protein sequence ID" value="CAH63545.1"/>
    <property type="status" value="ALT_INIT"/>
    <property type="molecule type" value="Genomic_DNA"/>
</dbReference>
<dbReference type="RefSeq" id="WP_041461302.1">
    <property type="nucleotide sequence ID" value="NC_004552.2"/>
</dbReference>
<dbReference type="SMR" id="Q5L725"/>
<dbReference type="GeneID" id="93024634"/>
<dbReference type="KEGG" id="cab:CAB088"/>
<dbReference type="eggNOG" id="COG0774">
    <property type="taxonomic scope" value="Bacteria"/>
</dbReference>
<dbReference type="HOGENOM" id="CLU_046528_1_0_0"/>
<dbReference type="OrthoDB" id="9772788at2"/>
<dbReference type="UniPathway" id="UPA00359">
    <property type="reaction ID" value="UER00478"/>
</dbReference>
<dbReference type="Proteomes" id="UP000001012">
    <property type="component" value="Chromosome"/>
</dbReference>
<dbReference type="GO" id="GO:0016020">
    <property type="term" value="C:membrane"/>
    <property type="evidence" value="ECO:0007669"/>
    <property type="project" value="GOC"/>
</dbReference>
<dbReference type="GO" id="GO:0046872">
    <property type="term" value="F:metal ion binding"/>
    <property type="evidence" value="ECO:0007669"/>
    <property type="project" value="UniProtKB-KW"/>
</dbReference>
<dbReference type="GO" id="GO:0103117">
    <property type="term" value="F:UDP-3-O-acyl-N-acetylglucosamine deacetylase activity"/>
    <property type="evidence" value="ECO:0007669"/>
    <property type="project" value="UniProtKB-UniRule"/>
</dbReference>
<dbReference type="GO" id="GO:0009245">
    <property type="term" value="P:lipid A biosynthetic process"/>
    <property type="evidence" value="ECO:0007669"/>
    <property type="project" value="UniProtKB-UniRule"/>
</dbReference>
<dbReference type="Gene3D" id="3.30.230.20">
    <property type="entry name" value="lpxc deacetylase, domain 1"/>
    <property type="match status" value="1"/>
</dbReference>
<dbReference type="Gene3D" id="3.30.1700.10">
    <property type="entry name" value="lpxc deacetylase, domain 2"/>
    <property type="match status" value="1"/>
</dbReference>
<dbReference type="HAMAP" id="MF_00388">
    <property type="entry name" value="LpxC"/>
    <property type="match status" value="1"/>
</dbReference>
<dbReference type="InterPro" id="IPR020568">
    <property type="entry name" value="Ribosomal_Su5_D2-typ_SF"/>
</dbReference>
<dbReference type="InterPro" id="IPR004463">
    <property type="entry name" value="UDP-acyl_GlcNac_deAcase"/>
</dbReference>
<dbReference type="InterPro" id="IPR011334">
    <property type="entry name" value="UDP-acyl_GlcNac_deAcase_C"/>
</dbReference>
<dbReference type="InterPro" id="IPR015870">
    <property type="entry name" value="UDP-acyl_N-AcGlcN_deAcase_N"/>
</dbReference>
<dbReference type="NCBIfam" id="TIGR00325">
    <property type="entry name" value="lpxC"/>
    <property type="match status" value="1"/>
</dbReference>
<dbReference type="PANTHER" id="PTHR33694">
    <property type="entry name" value="UDP-3-O-ACYL-N-ACETYLGLUCOSAMINE DEACETYLASE 1, MITOCHONDRIAL-RELATED"/>
    <property type="match status" value="1"/>
</dbReference>
<dbReference type="PANTHER" id="PTHR33694:SF1">
    <property type="entry name" value="UDP-3-O-ACYL-N-ACETYLGLUCOSAMINE DEACETYLASE 1, MITOCHONDRIAL-RELATED"/>
    <property type="match status" value="1"/>
</dbReference>
<dbReference type="Pfam" id="PF03331">
    <property type="entry name" value="LpxC"/>
    <property type="match status" value="1"/>
</dbReference>
<dbReference type="SUPFAM" id="SSF54211">
    <property type="entry name" value="Ribosomal protein S5 domain 2-like"/>
    <property type="match status" value="2"/>
</dbReference>
<feature type="chain" id="PRO_0000191923" description="UDP-3-O-acyl-N-acetylglucosamine deacetylase">
    <location>
        <begin position="1"/>
        <end position="280"/>
    </location>
</feature>
<feature type="active site" description="Proton donor" evidence="1">
    <location>
        <position position="264"/>
    </location>
</feature>
<feature type="binding site" evidence="1">
    <location>
        <position position="79"/>
    </location>
    <ligand>
        <name>Zn(2+)</name>
        <dbReference type="ChEBI" id="CHEBI:29105"/>
    </ligand>
</feature>
<feature type="binding site" evidence="1">
    <location>
        <position position="237"/>
    </location>
    <ligand>
        <name>Zn(2+)</name>
        <dbReference type="ChEBI" id="CHEBI:29105"/>
    </ligand>
</feature>
<feature type="binding site" evidence="1">
    <location>
        <position position="241"/>
    </location>
    <ligand>
        <name>Zn(2+)</name>
        <dbReference type="ChEBI" id="CHEBI:29105"/>
    </ligand>
</feature>
<reference key="1">
    <citation type="journal article" date="2005" name="Genome Res.">
        <title>The Chlamydophila abortus genome sequence reveals an array of variable proteins that contribute to interspecies variation.</title>
        <authorList>
            <person name="Thomson N.R."/>
            <person name="Yeats C."/>
            <person name="Bell K."/>
            <person name="Holden M.T.G."/>
            <person name="Bentley S.D."/>
            <person name="Livingstone M."/>
            <person name="Cerdeno-Tarraga A.-M."/>
            <person name="Harris B."/>
            <person name="Doggett J."/>
            <person name="Ormond D."/>
            <person name="Mungall K."/>
            <person name="Clarke K."/>
            <person name="Feltwell T."/>
            <person name="Hance Z."/>
            <person name="Sanders M."/>
            <person name="Quail M.A."/>
            <person name="Price C."/>
            <person name="Barrell B.G."/>
            <person name="Parkhill J."/>
            <person name="Longbottom D."/>
        </authorList>
    </citation>
    <scope>NUCLEOTIDE SEQUENCE [LARGE SCALE GENOMIC DNA]</scope>
    <source>
        <strain>DSM 27085 / S26/3</strain>
    </source>
</reference>
<gene>
    <name evidence="1" type="primary">lpxC</name>
    <name type="ordered locus">CAB088</name>
</gene>
<protein>
    <recommendedName>
        <fullName evidence="1">UDP-3-O-acyl-N-acetylglucosamine deacetylase</fullName>
        <shortName evidence="1">UDP-3-O-acyl-GlcNAc deacetylase</shortName>
        <ecNumber evidence="1">3.5.1.108</ecNumber>
    </recommendedName>
    <alternativeName>
        <fullName evidence="1">UDP-3-O-[R-3-hydroxymyristoyl]-N-acetylglucosamine deacetylase</fullName>
    </alternativeName>
</protein>
<organism>
    <name type="scientific">Chlamydia abortus (strain DSM 27085 / S26/3)</name>
    <name type="common">Chlamydophila abortus</name>
    <dbReference type="NCBI Taxonomy" id="218497"/>
    <lineage>
        <taxon>Bacteria</taxon>
        <taxon>Pseudomonadati</taxon>
        <taxon>Chlamydiota</taxon>
        <taxon>Chlamydiia</taxon>
        <taxon>Chlamydiales</taxon>
        <taxon>Chlamydiaceae</taxon>
        <taxon>Chlamydia/Chlamydophila group</taxon>
        <taxon>Chlamydia</taxon>
    </lineage>
</organism>
<name>LPXC_CHLAB</name>
<comment type="function">
    <text evidence="1">Catalyzes the hydrolysis of UDP-3-O-myristoyl-N-acetylglucosamine to form UDP-3-O-myristoylglucosamine and acetate, the committed step in lipid A biosynthesis.</text>
</comment>
<comment type="catalytic activity">
    <reaction evidence="1">
        <text>a UDP-3-O-[(3R)-3-hydroxyacyl]-N-acetyl-alpha-D-glucosamine + H2O = a UDP-3-O-[(3R)-3-hydroxyacyl]-alpha-D-glucosamine + acetate</text>
        <dbReference type="Rhea" id="RHEA:67816"/>
        <dbReference type="ChEBI" id="CHEBI:15377"/>
        <dbReference type="ChEBI" id="CHEBI:30089"/>
        <dbReference type="ChEBI" id="CHEBI:137740"/>
        <dbReference type="ChEBI" id="CHEBI:173225"/>
        <dbReference type="EC" id="3.5.1.108"/>
    </reaction>
</comment>
<comment type="cofactor">
    <cofactor evidence="1">
        <name>Zn(2+)</name>
        <dbReference type="ChEBI" id="CHEBI:29105"/>
    </cofactor>
</comment>
<comment type="pathway">
    <text evidence="1">Glycolipid biosynthesis; lipid IV(A) biosynthesis; lipid IV(A) from (3R)-3-hydroxytetradecanoyl-[acyl-carrier-protein] and UDP-N-acetyl-alpha-D-glucosamine: step 2/6.</text>
</comment>
<comment type="similarity">
    <text evidence="1">Belongs to the LpxC family.</text>
</comment>
<comment type="sequence caution" evidence="2">
    <conflict type="erroneous initiation">
        <sequence resource="EMBL-CDS" id="CAH63545"/>
    </conflict>
</comment>
<keyword id="KW-0378">Hydrolase</keyword>
<keyword id="KW-0441">Lipid A biosynthesis</keyword>
<keyword id="KW-0444">Lipid biosynthesis</keyword>
<keyword id="KW-0443">Lipid metabolism</keyword>
<keyword id="KW-0479">Metal-binding</keyword>
<keyword id="KW-0862">Zinc</keyword>
<evidence type="ECO:0000255" key="1">
    <source>
        <dbReference type="HAMAP-Rule" id="MF_00388"/>
    </source>
</evidence>
<evidence type="ECO:0000305" key="2"/>
<proteinExistence type="inferred from homology"/>
<accession>Q5L725</accession>